<protein>
    <recommendedName>
        <fullName evidence="5 6">Squalene synthase 3</fullName>
        <shortName evidence="5 6">PgSS3</shortName>
        <shortName evidence="7">SQS 3</shortName>
        <ecNumber evidence="2">2.5.1.21</ecNumber>
    </recommendedName>
    <alternativeName>
        <fullName evidence="7">FPP:FPP farnesyltransferase SS3</fullName>
    </alternativeName>
    <alternativeName>
        <fullName evidence="7">Farnesyl-diphosphate farnesyltransferase SS3</fullName>
    </alternativeName>
</protein>
<accession>D2K762</accession>
<name>SQS3_PANGI</name>
<sequence>MGSLGAILKHPDDFYPLLKLKIAARHAEKQIPSEPHWAFCYSMLHKVSRSFGLVIQQLGPQLRDAVCIFYLVLRALDTVEDDTSISTEVKVPIVMAFHCHIYDNDWHFSCGTKEYKVLMDEFHHVSNAFLDLGSSYKEAIEDITMRMGAGMAKFICKEVETIDDYDEYCHYVAGLVGLGLSKLFHASGAEDLATDSLSNSMGLFLQKTNIIRDYLEDINEIPKSRMFWPRQIWSKYVDKLEDLKYEENSGKAVQCLNDMVTNALLHVEDCLKYMSDLRDPAIFRFCAIPQIMAIGTLALCYNNIQVFRGVVKMRRGLTAKVIDRTNTMSDVYGTFFDFSCMLKSKVDNNDPNATKTLSRLEAIQKICKNSGALTTKRKSYIIENESGYNSTLIIILFIILAILYAYLSSNLPNSL</sequence>
<keyword id="KW-0256">Endoplasmic reticulum</keyword>
<keyword id="KW-0414">Isoprene biosynthesis</keyword>
<keyword id="KW-0472">Membrane</keyword>
<keyword id="KW-0808">Transferase</keyword>
<keyword id="KW-0812">Transmembrane</keyword>
<keyword id="KW-1133">Transmembrane helix</keyword>
<proteinExistence type="evidence at transcript level"/>
<organism>
    <name type="scientific">Panax ginseng</name>
    <name type="common">Korean ginseng</name>
    <dbReference type="NCBI Taxonomy" id="4054"/>
    <lineage>
        <taxon>Eukaryota</taxon>
        <taxon>Viridiplantae</taxon>
        <taxon>Streptophyta</taxon>
        <taxon>Embryophyta</taxon>
        <taxon>Tracheophyta</taxon>
        <taxon>Spermatophyta</taxon>
        <taxon>Magnoliopsida</taxon>
        <taxon>eudicotyledons</taxon>
        <taxon>Gunneridae</taxon>
        <taxon>Pentapetalae</taxon>
        <taxon>asterids</taxon>
        <taxon>campanulids</taxon>
        <taxon>Apiales</taxon>
        <taxon>Araliaceae</taxon>
        <taxon>Panax</taxon>
    </lineage>
</organism>
<comment type="function">
    <text evidence="1 4">Component of the triterpene saponins (e.g. ginsenosides or panaxosides) and phytosterols biosynthetic pathways (PubMed:29378087). Catalyzes the biosynthesis of squalene (By similarity).</text>
</comment>
<comment type="catalytic activity">
    <reaction evidence="2">
        <text>2 (2E,6E)-farnesyl diphosphate + NADH + H(+) = squalene + 2 diphosphate + NAD(+)</text>
        <dbReference type="Rhea" id="RHEA:32299"/>
        <dbReference type="ChEBI" id="CHEBI:15378"/>
        <dbReference type="ChEBI" id="CHEBI:15440"/>
        <dbReference type="ChEBI" id="CHEBI:33019"/>
        <dbReference type="ChEBI" id="CHEBI:57540"/>
        <dbReference type="ChEBI" id="CHEBI:57945"/>
        <dbReference type="ChEBI" id="CHEBI:175763"/>
        <dbReference type="EC" id="2.5.1.21"/>
    </reaction>
    <physiologicalReaction direction="left-to-right" evidence="5">
        <dbReference type="Rhea" id="RHEA:32300"/>
    </physiologicalReaction>
</comment>
<comment type="catalytic activity">
    <reaction evidence="2">
        <text>2 (2E,6E)-farnesyl diphosphate + NADPH + H(+) = squalene + 2 diphosphate + NADP(+)</text>
        <dbReference type="Rhea" id="RHEA:32295"/>
        <dbReference type="ChEBI" id="CHEBI:15378"/>
        <dbReference type="ChEBI" id="CHEBI:15440"/>
        <dbReference type="ChEBI" id="CHEBI:33019"/>
        <dbReference type="ChEBI" id="CHEBI:57783"/>
        <dbReference type="ChEBI" id="CHEBI:58349"/>
        <dbReference type="ChEBI" id="CHEBI:175763"/>
        <dbReference type="EC" id="2.5.1.21"/>
    </reaction>
    <physiologicalReaction direction="left-to-right" evidence="5">
        <dbReference type="Rhea" id="RHEA:32296"/>
    </physiologicalReaction>
</comment>
<comment type="cofactor">
    <cofactor evidence="2">
        <name>Mg(2+)</name>
        <dbReference type="ChEBI" id="CHEBI:18420"/>
    </cofactor>
    <cofactor evidence="2">
        <name>Mn(2+)</name>
        <dbReference type="ChEBI" id="CHEBI:29035"/>
    </cofactor>
</comment>
<comment type="pathway">
    <text evidence="2">Terpene metabolism; lanosterol biosynthesis; lanosterol from farnesyl diphosphate: step 1/3.</text>
</comment>
<comment type="subcellular location">
    <subcellularLocation>
        <location evidence="2">Endoplasmic reticulum membrane</location>
        <topology evidence="3">Multi-pass membrane protein</topology>
    </subcellularLocation>
</comment>
<comment type="similarity">
    <text evidence="7">Belongs to the phytoene/squalene synthase family.</text>
</comment>
<reference key="1">
    <citation type="submission" date="2009-11" db="EMBL/GenBank/DDBJ databases">
        <title>Isolation and characterization of squalene synthase gene (PgSS3) in Panax ginseng.</title>
        <authorList>
            <person name="Kim T.D."/>
            <person name="Han J.Y."/>
            <person name="Choi Y.E."/>
        </authorList>
    </citation>
    <scope>NUCLEOTIDE SEQUENCE [MRNA]</scope>
</reference>
<reference key="2">
    <citation type="journal article" date="2018" name="Biotechnol. Appl. Biochem.">
        <title>Advances in ginsenoside biosynthesis and metabolic regulation.</title>
        <authorList>
            <person name="Lu J."/>
            <person name="Li J."/>
            <person name="Wang S."/>
            <person name="Yao L."/>
            <person name="Liang W."/>
            <person name="Wang J."/>
            <person name="Gao W."/>
        </authorList>
    </citation>
    <scope>REVIEW</scope>
</reference>
<reference key="3">
    <citation type="journal article" date="2018" name="Molecules">
        <title>Progress on the studies of the key enzymes of ginsenoside biosynthesis.</title>
        <authorList>
            <person name="Yang J.-L."/>
            <person name="Hu Z.-F."/>
            <person name="Zhang T.-T."/>
            <person name="Gu A.-D."/>
            <person name="Gong T."/>
            <person name="Zhu P."/>
        </authorList>
    </citation>
    <scope>REVIEW</scope>
    <scope>NOMENCLATURE</scope>
</reference>
<gene>
    <name evidence="6" type="primary">SS3</name>
</gene>
<feature type="chain" id="PRO_0000446954" description="Squalene synthase 3">
    <location>
        <begin position="1"/>
        <end position="415"/>
    </location>
</feature>
<feature type="transmembrane region" description="Helical" evidence="3">
    <location>
        <begin position="281"/>
        <end position="301"/>
    </location>
</feature>
<feature type="transmembrane region" description="Helical" evidence="3">
    <location>
        <begin position="392"/>
        <end position="412"/>
    </location>
</feature>
<dbReference type="EC" id="2.5.1.21" evidence="2"/>
<dbReference type="EMBL" id="GU183406">
    <property type="protein sequence ID" value="ACZ71037.1"/>
    <property type="molecule type" value="mRNA"/>
</dbReference>
<dbReference type="SMR" id="D2K762"/>
<dbReference type="UniPathway" id="UPA00767">
    <property type="reaction ID" value="UER00751"/>
</dbReference>
<dbReference type="GO" id="GO:0005789">
    <property type="term" value="C:endoplasmic reticulum membrane"/>
    <property type="evidence" value="ECO:0007669"/>
    <property type="project" value="UniProtKB-SubCell"/>
</dbReference>
<dbReference type="GO" id="GO:0051996">
    <property type="term" value="F:squalene synthase [NAD(P)H] activity"/>
    <property type="evidence" value="ECO:0007669"/>
    <property type="project" value="UniProtKB-EC"/>
</dbReference>
<dbReference type="GO" id="GO:0045338">
    <property type="term" value="P:farnesyl diphosphate metabolic process"/>
    <property type="evidence" value="ECO:0007669"/>
    <property type="project" value="InterPro"/>
</dbReference>
<dbReference type="GO" id="GO:0008299">
    <property type="term" value="P:isoprenoid biosynthetic process"/>
    <property type="evidence" value="ECO:0007669"/>
    <property type="project" value="UniProtKB-KW"/>
</dbReference>
<dbReference type="GO" id="GO:0009753">
    <property type="term" value="P:response to jasmonic acid"/>
    <property type="evidence" value="ECO:0007669"/>
    <property type="project" value="UniProtKB-ARBA"/>
</dbReference>
<dbReference type="CDD" id="cd00683">
    <property type="entry name" value="Trans_IPPS_HH"/>
    <property type="match status" value="1"/>
</dbReference>
<dbReference type="FunFam" id="1.10.600.10:FF:000012">
    <property type="entry name" value="Squalene synthase 1"/>
    <property type="match status" value="1"/>
</dbReference>
<dbReference type="Gene3D" id="1.10.600.10">
    <property type="entry name" value="Farnesyl Diphosphate Synthase"/>
    <property type="match status" value="1"/>
</dbReference>
<dbReference type="InterPro" id="IPR008949">
    <property type="entry name" value="Isoprenoid_synthase_dom_sf"/>
</dbReference>
<dbReference type="InterPro" id="IPR002060">
    <property type="entry name" value="Squ/phyt_synthse"/>
</dbReference>
<dbReference type="InterPro" id="IPR006449">
    <property type="entry name" value="Squal_synth-like"/>
</dbReference>
<dbReference type="InterPro" id="IPR019845">
    <property type="entry name" value="Squalene/phytoene_synthase_CS"/>
</dbReference>
<dbReference type="InterPro" id="IPR044844">
    <property type="entry name" value="Trans_IPPS_euk-type"/>
</dbReference>
<dbReference type="InterPro" id="IPR033904">
    <property type="entry name" value="Trans_IPPS_HH"/>
</dbReference>
<dbReference type="NCBIfam" id="TIGR01559">
    <property type="entry name" value="squal_synth"/>
    <property type="match status" value="1"/>
</dbReference>
<dbReference type="PANTHER" id="PTHR11626">
    <property type="entry name" value="FARNESYL-DIPHOSPHATE FARNESYLTRANSFERASE"/>
    <property type="match status" value="1"/>
</dbReference>
<dbReference type="PANTHER" id="PTHR11626:SF2">
    <property type="entry name" value="SQUALENE SYNTHASE"/>
    <property type="match status" value="1"/>
</dbReference>
<dbReference type="Pfam" id="PF00494">
    <property type="entry name" value="SQS_PSY"/>
    <property type="match status" value="1"/>
</dbReference>
<dbReference type="SFLD" id="SFLDS00005">
    <property type="entry name" value="Isoprenoid_Synthase_Type_I"/>
    <property type="match status" value="1"/>
</dbReference>
<dbReference type="SFLD" id="SFLDG01018">
    <property type="entry name" value="Squalene/Phytoene_Synthase_Lik"/>
    <property type="match status" value="1"/>
</dbReference>
<dbReference type="SUPFAM" id="SSF48576">
    <property type="entry name" value="Terpenoid synthases"/>
    <property type="match status" value="1"/>
</dbReference>
<dbReference type="PROSITE" id="PS01044">
    <property type="entry name" value="SQUALEN_PHYTOEN_SYN_1"/>
    <property type="match status" value="1"/>
</dbReference>
<dbReference type="PROSITE" id="PS01045">
    <property type="entry name" value="SQUALEN_PHYTOEN_SYN_2"/>
    <property type="match status" value="1"/>
</dbReference>
<evidence type="ECO:0000250" key="1">
    <source>
        <dbReference type="UniProtKB" id="O48666"/>
    </source>
</evidence>
<evidence type="ECO:0000250" key="2">
    <source>
        <dbReference type="UniProtKB" id="P53799"/>
    </source>
</evidence>
<evidence type="ECO:0000255" key="3"/>
<evidence type="ECO:0000303" key="4">
    <source>
    </source>
</evidence>
<evidence type="ECO:0000303" key="5">
    <source>
    </source>
</evidence>
<evidence type="ECO:0000303" key="6">
    <source ref="1"/>
</evidence>
<evidence type="ECO:0000305" key="7"/>